<comment type="function">
    <text evidence="1">Hydrolyzes ribosome-free peptidyl-tRNAs (with 1 or more amino acids incorporated), which drop off the ribosome during protein synthesis, or as a result of ribosome stalling.</text>
</comment>
<comment type="function">
    <text evidence="1">Catalyzes the release of premature peptidyl moieties from peptidyl-tRNA molecules trapped in stalled 50S ribosomal subunits, and thus maintains levels of free tRNAs and 50S ribosomes.</text>
</comment>
<comment type="catalytic activity">
    <reaction evidence="1">
        <text>an N-acyl-L-alpha-aminoacyl-tRNA + H2O = an N-acyl-L-amino acid + a tRNA + H(+)</text>
        <dbReference type="Rhea" id="RHEA:54448"/>
        <dbReference type="Rhea" id="RHEA-COMP:10123"/>
        <dbReference type="Rhea" id="RHEA-COMP:13883"/>
        <dbReference type="ChEBI" id="CHEBI:15377"/>
        <dbReference type="ChEBI" id="CHEBI:15378"/>
        <dbReference type="ChEBI" id="CHEBI:59874"/>
        <dbReference type="ChEBI" id="CHEBI:78442"/>
        <dbReference type="ChEBI" id="CHEBI:138191"/>
        <dbReference type="EC" id="3.1.1.29"/>
    </reaction>
</comment>
<comment type="subunit">
    <text evidence="1">Monomer.</text>
</comment>
<comment type="subcellular location">
    <subcellularLocation>
        <location evidence="1">Cytoplasm</location>
    </subcellularLocation>
</comment>
<comment type="similarity">
    <text evidence="1">Belongs to the PTH family.</text>
</comment>
<reference key="1">
    <citation type="submission" date="2007-02" db="EMBL/GenBank/DDBJ databases">
        <title>Complete sequence of Mycobacterium sp. JLS.</title>
        <authorList>
            <consortium name="US DOE Joint Genome Institute"/>
            <person name="Copeland A."/>
            <person name="Lucas S."/>
            <person name="Lapidus A."/>
            <person name="Barry K."/>
            <person name="Detter J.C."/>
            <person name="Glavina del Rio T."/>
            <person name="Hammon N."/>
            <person name="Israni S."/>
            <person name="Dalin E."/>
            <person name="Tice H."/>
            <person name="Pitluck S."/>
            <person name="Chain P."/>
            <person name="Malfatti S."/>
            <person name="Shin M."/>
            <person name="Vergez L."/>
            <person name="Schmutz J."/>
            <person name="Larimer F."/>
            <person name="Land M."/>
            <person name="Hauser L."/>
            <person name="Kyrpides N."/>
            <person name="Mikhailova N."/>
            <person name="Miller C.D."/>
            <person name="Anderson A.J."/>
            <person name="Sims R.C."/>
            <person name="Richardson P."/>
        </authorList>
    </citation>
    <scope>NUCLEOTIDE SEQUENCE [LARGE SCALE GENOMIC DNA]</scope>
    <source>
        <strain>JLS</strain>
    </source>
</reference>
<dbReference type="EC" id="3.1.1.29" evidence="1"/>
<dbReference type="EMBL" id="CP000580">
    <property type="protein sequence ID" value="ABO00399.1"/>
    <property type="molecule type" value="Genomic_DNA"/>
</dbReference>
<dbReference type="SMR" id="A3Q5H1"/>
<dbReference type="KEGG" id="mjl:Mjls_4633"/>
<dbReference type="HOGENOM" id="CLU_062456_2_2_11"/>
<dbReference type="BioCyc" id="MSP164757:G1G8C-4674-MONOMER"/>
<dbReference type="GO" id="GO:0005737">
    <property type="term" value="C:cytoplasm"/>
    <property type="evidence" value="ECO:0007669"/>
    <property type="project" value="UniProtKB-SubCell"/>
</dbReference>
<dbReference type="GO" id="GO:0004045">
    <property type="term" value="F:peptidyl-tRNA hydrolase activity"/>
    <property type="evidence" value="ECO:0007669"/>
    <property type="project" value="UniProtKB-UniRule"/>
</dbReference>
<dbReference type="GO" id="GO:0000049">
    <property type="term" value="F:tRNA binding"/>
    <property type="evidence" value="ECO:0007669"/>
    <property type="project" value="UniProtKB-UniRule"/>
</dbReference>
<dbReference type="GO" id="GO:0006515">
    <property type="term" value="P:protein quality control for misfolded or incompletely synthesized proteins"/>
    <property type="evidence" value="ECO:0007669"/>
    <property type="project" value="UniProtKB-UniRule"/>
</dbReference>
<dbReference type="GO" id="GO:0072344">
    <property type="term" value="P:rescue of stalled ribosome"/>
    <property type="evidence" value="ECO:0007669"/>
    <property type="project" value="UniProtKB-UniRule"/>
</dbReference>
<dbReference type="CDD" id="cd00462">
    <property type="entry name" value="PTH"/>
    <property type="match status" value="1"/>
</dbReference>
<dbReference type="FunFam" id="3.40.50.1470:FF:000001">
    <property type="entry name" value="Peptidyl-tRNA hydrolase"/>
    <property type="match status" value="1"/>
</dbReference>
<dbReference type="Gene3D" id="3.40.50.1470">
    <property type="entry name" value="Peptidyl-tRNA hydrolase"/>
    <property type="match status" value="1"/>
</dbReference>
<dbReference type="HAMAP" id="MF_00083">
    <property type="entry name" value="Pept_tRNA_hydro_bact"/>
    <property type="match status" value="1"/>
</dbReference>
<dbReference type="InterPro" id="IPR001328">
    <property type="entry name" value="Pept_tRNA_hydro"/>
</dbReference>
<dbReference type="InterPro" id="IPR018171">
    <property type="entry name" value="Pept_tRNA_hydro_CS"/>
</dbReference>
<dbReference type="InterPro" id="IPR036416">
    <property type="entry name" value="Pept_tRNA_hydro_sf"/>
</dbReference>
<dbReference type="NCBIfam" id="TIGR00447">
    <property type="entry name" value="pth"/>
    <property type="match status" value="1"/>
</dbReference>
<dbReference type="PANTHER" id="PTHR17224">
    <property type="entry name" value="PEPTIDYL-TRNA HYDROLASE"/>
    <property type="match status" value="1"/>
</dbReference>
<dbReference type="PANTHER" id="PTHR17224:SF1">
    <property type="entry name" value="PEPTIDYL-TRNA HYDROLASE"/>
    <property type="match status" value="1"/>
</dbReference>
<dbReference type="Pfam" id="PF01195">
    <property type="entry name" value="Pept_tRNA_hydro"/>
    <property type="match status" value="1"/>
</dbReference>
<dbReference type="SUPFAM" id="SSF53178">
    <property type="entry name" value="Peptidyl-tRNA hydrolase-like"/>
    <property type="match status" value="1"/>
</dbReference>
<dbReference type="PROSITE" id="PS01195">
    <property type="entry name" value="PEPT_TRNA_HYDROL_1"/>
    <property type="match status" value="1"/>
</dbReference>
<dbReference type="PROSITE" id="PS01196">
    <property type="entry name" value="PEPT_TRNA_HYDROL_2"/>
    <property type="match status" value="1"/>
</dbReference>
<proteinExistence type="inferred from homology"/>
<evidence type="ECO:0000255" key="1">
    <source>
        <dbReference type="HAMAP-Rule" id="MF_00083"/>
    </source>
</evidence>
<protein>
    <recommendedName>
        <fullName evidence="1">Peptidyl-tRNA hydrolase</fullName>
        <shortName evidence="1">Pth</shortName>
        <ecNumber evidence="1">3.1.1.29</ecNumber>
    </recommendedName>
</protein>
<name>PTH_MYCSJ</name>
<keyword id="KW-0963">Cytoplasm</keyword>
<keyword id="KW-0378">Hydrolase</keyword>
<keyword id="KW-0694">RNA-binding</keyword>
<keyword id="KW-0820">tRNA-binding</keyword>
<organism>
    <name type="scientific">Mycobacterium sp. (strain JLS)</name>
    <dbReference type="NCBI Taxonomy" id="164757"/>
    <lineage>
        <taxon>Bacteria</taxon>
        <taxon>Bacillati</taxon>
        <taxon>Actinomycetota</taxon>
        <taxon>Actinomycetes</taxon>
        <taxon>Mycobacteriales</taxon>
        <taxon>Mycobacteriaceae</taxon>
        <taxon>Mycobacterium</taxon>
    </lineage>
</organism>
<gene>
    <name evidence="1" type="primary">pth</name>
    <name type="ordered locus">Mjls_4633</name>
</gene>
<sequence>MAEPLLVVGLGNPGPNYAKTRHNVGFVVADLLAGRIGSGFKAHRKSGADIATGRLAGRAVVLAKPRTYMNESGRNVGPLAKFYSVAPADVIVIHDELDIDFGRIRLKFGGGVAGHNGLKSVAAALGTKDFQRVRVGVGRPPGRKDAATYVLEPFTSVERPEVPTICEQAADATELLIAQGLEPAQNLVHAWA</sequence>
<feature type="chain" id="PRO_1000010614" description="Peptidyl-tRNA hydrolase">
    <location>
        <begin position="1"/>
        <end position="192"/>
    </location>
</feature>
<feature type="active site" description="Proton acceptor" evidence="1">
    <location>
        <position position="22"/>
    </location>
</feature>
<feature type="binding site" evidence="1">
    <location>
        <position position="17"/>
    </location>
    <ligand>
        <name>tRNA</name>
        <dbReference type="ChEBI" id="CHEBI:17843"/>
    </ligand>
</feature>
<feature type="binding site" evidence="1">
    <location>
        <position position="68"/>
    </location>
    <ligand>
        <name>tRNA</name>
        <dbReference type="ChEBI" id="CHEBI:17843"/>
    </ligand>
</feature>
<feature type="binding site" evidence="1">
    <location>
        <position position="70"/>
    </location>
    <ligand>
        <name>tRNA</name>
        <dbReference type="ChEBI" id="CHEBI:17843"/>
    </ligand>
</feature>
<feature type="binding site" evidence="1">
    <location>
        <position position="116"/>
    </location>
    <ligand>
        <name>tRNA</name>
        <dbReference type="ChEBI" id="CHEBI:17843"/>
    </ligand>
</feature>
<feature type="site" description="Discriminates between blocked and unblocked aminoacyl-tRNA" evidence="1">
    <location>
        <position position="12"/>
    </location>
</feature>
<feature type="site" description="Stabilizes the basic form of H active site to accept a proton" evidence="1">
    <location>
        <position position="95"/>
    </location>
</feature>
<accession>A3Q5H1</accession>